<protein>
    <recommendedName>
        <fullName evidence="1">Elongation factor G</fullName>
        <shortName evidence="1">EF-G</shortName>
    </recommendedName>
</protein>
<sequence length="700" mass="77227">MARITPIERYRNIGISAHIDAGKTTTSERILFYTGVSHKIGEVHDGAATMDWMEQEQERGITITSAATTAFWSGMSQQFQQHRINVIDTPGHVDFTIEVERSMRVLDGAVMVYCAVGGVQPQSETVWRQANKYQVPRIAFVNKMDRTGANFLRVVEQLKTRLGANAVPLQLPVGAEDNFKGVVDLIKMKAINWNEEDQGMTFTYDDIPADMLEACEEWRNNLVEAAAESSEELMEKYLGGEELTEEEIKGALRARVLANEIILVTCGSAFKNKGVQAMLDAVVEYLPSPVDIPAIKGINEDETEGERHASDDEPFAALAFKIATDPFVGNLTFFRVYSGVVNSGDTVVNSVRQKRERFGRIVQMHANKREEIKEVRAGDIAAAIGLKDVTTGDTLCDPNAPIILERMEFPDPVISVAVEPKTKADQEKMGLALGRLAQEDPSFRVHTDEESGETIISGMGELHLDIIVDRMKREFKVEANIGKPQVSYRETIRTRVNDVEGKHAKQSGGRGQYGHVVIDLYPLDPEGPGYEFVNEIKGGVIPGEYIPAVDKGIQEQLKSGPLAGYPVVDIGVRLHFGSYHDVDSSELAFKLAASIAFKAAFNKANPVLLEPIMKVEVETPPEYVGDVIGDLSRRRAMVNGQEANDFVVKINAEVPLSEMFGYATDLRSQTQGRASYSMEPLKYAEAPTSVAAAVIEARKK</sequence>
<organism>
    <name type="scientific">Mannheimia succiniciproducens (strain KCTC 0769BP / MBEL55E)</name>
    <dbReference type="NCBI Taxonomy" id="221988"/>
    <lineage>
        <taxon>Bacteria</taxon>
        <taxon>Pseudomonadati</taxon>
        <taxon>Pseudomonadota</taxon>
        <taxon>Gammaproteobacteria</taxon>
        <taxon>Pasteurellales</taxon>
        <taxon>Pasteurellaceae</taxon>
        <taxon>Basfia</taxon>
    </lineage>
</organism>
<reference key="1">
    <citation type="journal article" date="2004" name="Nat. Biotechnol.">
        <title>The genome sequence of the capnophilic rumen bacterium Mannheimia succiniciproducens.</title>
        <authorList>
            <person name="Hong S.H."/>
            <person name="Kim J.S."/>
            <person name="Lee S.Y."/>
            <person name="In Y.H."/>
            <person name="Choi S.S."/>
            <person name="Rih J.-K."/>
            <person name="Kim C.H."/>
            <person name="Jeong H."/>
            <person name="Hur C.G."/>
            <person name="Kim J.J."/>
        </authorList>
    </citation>
    <scope>NUCLEOTIDE SEQUENCE [LARGE SCALE GENOMIC DNA]</scope>
    <source>
        <strain>KCTC 0769BP / MBEL55E</strain>
    </source>
</reference>
<name>EFG_MANSM</name>
<comment type="function">
    <text evidence="1">Catalyzes the GTP-dependent ribosomal translocation step during translation elongation. During this step, the ribosome changes from the pre-translocational (PRE) to the post-translocational (POST) state as the newly formed A-site-bound peptidyl-tRNA and P-site-bound deacylated tRNA move to the P and E sites, respectively. Catalyzes the coordinated movement of the two tRNA molecules, the mRNA and conformational changes in the ribosome.</text>
</comment>
<comment type="subcellular location">
    <subcellularLocation>
        <location evidence="1">Cytoplasm</location>
    </subcellularLocation>
</comment>
<comment type="similarity">
    <text evidence="1">Belongs to the TRAFAC class translation factor GTPase superfamily. Classic translation factor GTPase family. EF-G/EF-2 subfamily.</text>
</comment>
<gene>
    <name evidence="1" type="primary">fusA</name>
    <name type="ordered locus">MS0164</name>
</gene>
<feature type="chain" id="PRO_0000091149" description="Elongation factor G">
    <location>
        <begin position="1"/>
        <end position="700"/>
    </location>
</feature>
<feature type="domain" description="tr-type G">
    <location>
        <begin position="8"/>
        <end position="290"/>
    </location>
</feature>
<feature type="binding site" evidence="1">
    <location>
        <begin position="17"/>
        <end position="24"/>
    </location>
    <ligand>
        <name>GTP</name>
        <dbReference type="ChEBI" id="CHEBI:37565"/>
    </ligand>
</feature>
<feature type="binding site" evidence="1">
    <location>
        <begin position="88"/>
        <end position="92"/>
    </location>
    <ligand>
        <name>GTP</name>
        <dbReference type="ChEBI" id="CHEBI:37565"/>
    </ligand>
</feature>
<feature type="binding site" evidence="1">
    <location>
        <begin position="142"/>
        <end position="145"/>
    </location>
    <ligand>
        <name>GTP</name>
        <dbReference type="ChEBI" id="CHEBI:37565"/>
    </ligand>
</feature>
<dbReference type="EMBL" id="AE016827">
    <property type="protein sequence ID" value="AAU36771.1"/>
    <property type="molecule type" value="Genomic_DNA"/>
</dbReference>
<dbReference type="RefSeq" id="WP_011199347.1">
    <property type="nucleotide sequence ID" value="NC_006300.1"/>
</dbReference>
<dbReference type="SMR" id="Q65W89"/>
<dbReference type="STRING" id="221988.MS0164"/>
<dbReference type="KEGG" id="msu:MS0164"/>
<dbReference type="eggNOG" id="COG0480">
    <property type="taxonomic scope" value="Bacteria"/>
</dbReference>
<dbReference type="HOGENOM" id="CLU_002794_4_1_6"/>
<dbReference type="OrthoDB" id="9804431at2"/>
<dbReference type="Proteomes" id="UP000000607">
    <property type="component" value="Chromosome"/>
</dbReference>
<dbReference type="GO" id="GO:0005737">
    <property type="term" value="C:cytoplasm"/>
    <property type="evidence" value="ECO:0007669"/>
    <property type="project" value="UniProtKB-SubCell"/>
</dbReference>
<dbReference type="GO" id="GO:0005525">
    <property type="term" value="F:GTP binding"/>
    <property type="evidence" value="ECO:0007669"/>
    <property type="project" value="UniProtKB-UniRule"/>
</dbReference>
<dbReference type="GO" id="GO:0003924">
    <property type="term" value="F:GTPase activity"/>
    <property type="evidence" value="ECO:0007669"/>
    <property type="project" value="InterPro"/>
</dbReference>
<dbReference type="GO" id="GO:0097216">
    <property type="term" value="F:guanosine tetraphosphate binding"/>
    <property type="evidence" value="ECO:0007669"/>
    <property type="project" value="UniProtKB-ARBA"/>
</dbReference>
<dbReference type="GO" id="GO:0003746">
    <property type="term" value="F:translation elongation factor activity"/>
    <property type="evidence" value="ECO:0007669"/>
    <property type="project" value="UniProtKB-UniRule"/>
</dbReference>
<dbReference type="GO" id="GO:0032790">
    <property type="term" value="P:ribosome disassembly"/>
    <property type="evidence" value="ECO:0007669"/>
    <property type="project" value="TreeGrafter"/>
</dbReference>
<dbReference type="CDD" id="cd01886">
    <property type="entry name" value="EF-G"/>
    <property type="match status" value="1"/>
</dbReference>
<dbReference type="CDD" id="cd16262">
    <property type="entry name" value="EFG_III"/>
    <property type="match status" value="1"/>
</dbReference>
<dbReference type="CDD" id="cd01434">
    <property type="entry name" value="EFG_mtEFG1_IV"/>
    <property type="match status" value="1"/>
</dbReference>
<dbReference type="CDD" id="cd03713">
    <property type="entry name" value="EFG_mtEFG_C"/>
    <property type="match status" value="1"/>
</dbReference>
<dbReference type="CDD" id="cd04088">
    <property type="entry name" value="EFG_mtEFG_II"/>
    <property type="match status" value="1"/>
</dbReference>
<dbReference type="FunFam" id="2.40.30.10:FF:000006">
    <property type="entry name" value="Elongation factor G"/>
    <property type="match status" value="1"/>
</dbReference>
<dbReference type="FunFam" id="3.30.230.10:FF:000003">
    <property type="entry name" value="Elongation factor G"/>
    <property type="match status" value="1"/>
</dbReference>
<dbReference type="FunFam" id="3.30.70.240:FF:000001">
    <property type="entry name" value="Elongation factor G"/>
    <property type="match status" value="1"/>
</dbReference>
<dbReference type="FunFam" id="3.30.70.870:FF:000001">
    <property type="entry name" value="Elongation factor G"/>
    <property type="match status" value="1"/>
</dbReference>
<dbReference type="FunFam" id="3.40.50.300:FF:000029">
    <property type="entry name" value="Elongation factor G"/>
    <property type="match status" value="1"/>
</dbReference>
<dbReference type="Gene3D" id="3.30.230.10">
    <property type="match status" value="1"/>
</dbReference>
<dbReference type="Gene3D" id="3.30.70.240">
    <property type="match status" value="1"/>
</dbReference>
<dbReference type="Gene3D" id="3.30.70.870">
    <property type="entry name" value="Elongation Factor G (Translational Gtpase), domain 3"/>
    <property type="match status" value="1"/>
</dbReference>
<dbReference type="Gene3D" id="3.40.50.300">
    <property type="entry name" value="P-loop containing nucleotide triphosphate hydrolases"/>
    <property type="match status" value="1"/>
</dbReference>
<dbReference type="Gene3D" id="2.40.30.10">
    <property type="entry name" value="Translation factors"/>
    <property type="match status" value="1"/>
</dbReference>
<dbReference type="HAMAP" id="MF_00054_B">
    <property type="entry name" value="EF_G_EF_2_B"/>
    <property type="match status" value="1"/>
</dbReference>
<dbReference type="InterPro" id="IPR041095">
    <property type="entry name" value="EFG_II"/>
</dbReference>
<dbReference type="InterPro" id="IPR009022">
    <property type="entry name" value="EFG_III"/>
</dbReference>
<dbReference type="InterPro" id="IPR035647">
    <property type="entry name" value="EFG_III/V"/>
</dbReference>
<dbReference type="InterPro" id="IPR047872">
    <property type="entry name" value="EFG_IV"/>
</dbReference>
<dbReference type="InterPro" id="IPR035649">
    <property type="entry name" value="EFG_V"/>
</dbReference>
<dbReference type="InterPro" id="IPR000640">
    <property type="entry name" value="EFG_V-like"/>
</dbReference>
<dbReference type="InterPro" id="IPR004161">
    <property type="entry name" value="EFTu-like_2"/>
</dbReference>
<dbReference type="InterPro" id="IPR031157">
    <property type="entry name" value="G_TR_CS"/>
</dbReference>
<dbReference type="InterPro" id="IPR027417">
    <property type="entry name" value="P-loop_NTPase"/>
</dbReference>
<dbReference type="InterPro" id="IPR020568">
    <property type="entry name" value="Ribosomal_Su5_D2-typ_SF"/>
</dbReference>
<dbReference type="InterPro" id="IPR014721">
    <property type="entry name" value="Ribsml_uS5_D2-typ_fold_subgr"/>
</dbReference>
<dbReference type="InterPro" id="IPR005225">
    <property type="entry name" value="Small_GTP-bd"/>
</dbReference>
<dbReference type="InterPro" id="IPR000795">
    <property type="entry name" value="T_Tr_GTP-bd_dom"/>
</dbReference>
<dbReference type="InterPro" id="IPR009000">
    <property type="entry name" value="Transl_B-barrel_sf"/>
</dbReference>
<dbReference type="InterPro" id="IPR004540">
    <property type="entry name" value="Transl_elong_EFG/EF2"/>
</dbReference>
<dbReference type="InterPro" id="IPR005517">
    <property type="entry name" value="Transl_elong_EFG/EF2_IV"/>
</dbReference>
<dbReference type="NCBIfam" id="TIGR00484">
    <property type="entry name" value="EF-G"/>
    <property type="match status" value="1"/>
</dbReference>
<dbReference type="NCBIfam" id="NF009381">
    <property type="entry name" value="PRK12740.1-5"/>
    <property type="match status" value="1"/>
</dbReference>
<dbReference type="NCBIfam" id="TIGR00231">
    <property type="entry name" value="small_GTP"/>
    <property type="match status" value="1"/>
</dbReference>
<dbReference type="PANTHER" id="PTHR43261:SF1">
    <property type="entry name" value="RIBOSOME-RELEASING FACTOR 2, MITOCHONDRIAL"/>
    <property type="match status" value="1"/>
</dbReference>
<dbReference type="PANTHER" id="PTHR43261">
    <property type="entry name" value="TRANSLATION ELONGATION FACTOR G-RELATED"/>
    <property type="match status" value="1"/>
</dbReference>
<dbReference type="Pfam" id="PF00679">
    <property type="entry name" value="EFG_C"/>
    <property type="match status" value="1"/>
</dbReference>
<dbReference type="Pfam" id="PF14492">
    <property type="entry name" value="EFG_III"/>
    <property type="match status" value="1"/>
</dbReference>
<dbReference type="Pfam" id="PF03764">
    <property type="entry name" value="EFG_IV"/>
    <property type="match status" value="1"/>
</dbReference>
<dbReference type="Pfam" id="PF00009">
    <property type="entry name" value="GTP_EFTU"/>
    <property type="match status" value="1"/>
</dbReference>
<dbReference type="Pfam" id="PF03144">
    <property type="entry name" value="GTP_EFTU_D2"/>
    <property type="match status" value="1"/>
</dbReference>
<dbReference type="PRINTS" id="PR00315">
    <property type="entry name" value="ELONGATNFCT"/>
</dbReference>
<dbReference type="SMART" id="SM00838">
    <property type="entry name" value="EFG_C"/>
    <property type="match status" value="1"/>
</dbReference>
<dbReference type="SMART" id="SM00889">
    <property type="entry name" value="EFG_IV"/>
    <property type="match status" value="1"/>
</dbReference>
<dbReference type="SUPFAM" id="SSF54980">
    <property type="entry name" value="EF-G C-terminal domain-like"/>
    <property type="match status" value="2"/>
</dbReference>
<dbReference type="SUPFAM" id="SSF52540">
    <property type="entry name" value="P-loop containing nucleoside triphosphate hydrolases"/>
    <property type="match status" value="1"/>
</dbReference>
<dbReference type="SUPFAM" id="SSF54211">
    <property type="entry name" value="Ribosomal protein S5 domain 2-like"/>
    <property type="match status" value="1"/>
</dbReference>
<dbReference type="SUPFAM" id="SSF50447">
    <property type="entry name" value="Translation proteins"/>
    <property type="match status" value="1"/>
</dbReference>
<dbReference type="PROSITE" id="PS00301">
    <property type="entry name" value="G_TR_1"/>
    <property type="match status" value="1"/>
</dbReference>
<dbReference type="PROSITE" id="PS51722">
    <property type="entry name" value="G_TR_2"/>
    <property type="match status" value="1"/>
</dbReference>
<evidence type="ECO:0000255" key="1">
    <source>
        <dbReference type="HAMAP-Rule" id="MF_00054"/>
    </source>
</evidence>
<keyword id="KW-0963">Cytoplasm</keyword>
<keyword id="KW-0251">Elongation factor</keyword>
<keyword id="KW-0342">GTP-binding</keyword>
<keyword id="KW-0547">Nucleotide-binding</keyword>
<keyword id="KW-0648">Protein biosynthesis</keyword>
<accession>Q65W89</accession>
<proteinExistence type="inferred from homology"/>